<comment type="function">
    <text evidence="4 5 6 7 8 9 10 11 12 13">Histone demethylase that demethylates 'Lys-36' (H3K36me) of histone H3 with a specific activity for H3K36me3 and H3K36me2 (PubMed:25132385, PubMed:30774641). Also active on 'Lys-27' (H3K27me) of histone H3 with a specific activity for H3K27me3 and H3K27me2 (PubMed:25267112, PubMed:30774641, PubMed:33324437). No activity on H3K36me1 and H3K27me1 (PubMed:25132385, PubMed:25267112). Involved in the control of flowering time by demethylating H3K36me2 at the FT locus and repressing its expression (PubMed:25132385). Acts within the central clock and contributes, in parallel with LUX, to temperature compensation, probably as a component of the evening complex, to maintain circadian period at increasing temperatures; this mechanism involves binding to and regulation of CCA1 and PRR7 promoters (PubMed:21358285, PubMed:30774641). Works in concert with TOC1 to promote the morning-phased clock genes CCA1 and LHY which function as components of the central oscillator (PubMed:21358285). Together with JMJ32, regulates the flowering-repressor FLOWERING LOCUS C (FLC) locus by removing the repressive histone modification H3 lysine 27 trimethylation (H3K27me3), especially at elevated temperatures (e.g. 29 degrees Celsius), thus preventing extreme precocious flowering (PubMed:25267112). JMJ30 and JMJ32 are regulators involved in the integration of abscisic acid (ABA) and brassinosteroids (BR) signaling pathways (PubMed:33324437). Together with JMJ32, controls ABA-mediated growth arrest during the post-germination stage in unfavorable conditions, and responses to ABA during root development, via the removal of repressive histone mark (H3K27me3) from the SnRK2.8 promoter, thus promoting SnRK2.8 expression and subsequent kinase-dependent ABI3 activation (PubMed:30859592, PubMed:30983495). In addition, removes the repressive histone marks (H3K27me3) from the BZR1 locus in response to stress and ABA, thus activating the BR signaling pathway which, in turn, inhibits the ABA signaling pathway (PubMed:33324437). Able to drive tissue identity changes to promote callus formation form somatic cells via a massive genome-wide chromatin remodeling (e.g. H3K9me3 demethylation) leading to the induction of Lateral organ Boundaries-Domain (LBD) genes (e.g. LBD16 and LBD29) that establish root primordia; when in complex with ARF proteins (e.g. ARF7 and ARF19), recruits ATXR2 which promotes the deposition of H3K36me3 at LBD genes promoters, thus ensuring their stable activation during callus formation (PubMed:29923261).</text>
</comment>
<comment type="catalytic activity">
    <reaction evidence="7">
        <text>N(6),N(6),N(6)-trimethyl-L-lysyl(36)-[histone H3] + 2 2-oxoglutarate + 2 O2 = N(6)-methyl-L-lysyl(36)-[histone H3] + 2 formaldehyde + 2 succinate + 2 CO2</text>
        <dbReference type="Rhea" id="RHEA:60236"/>
        <dbReference type="Rhea" id="RHEA-COMP:9786"/>
        <dbReference type="Rhea" id="RHEA-COMP:15536"/>
        <dbReference type="ChEBI" id="CHEBI:15379"/>
        <dbReference type="ChEBI" id="CHEBI:16526"/>
        <dbReference type="ChEBI" id="CHEBI:16810"/>
        <dbReference type="ChEBI" id="CHEBI:16842"/>
        <dbReference type="ChEBI" id="CHEBI:30031"/>
        <dbReference type="ChEBI" id="CHEBI:61929"/>
        <dbReference type="ChEBI" id="CHEBI:61961"/>
        <dbReference type="EC" id="1.14.11.69"/>
    </reaction>
    <physiologicalReaction direction="left-to-right" evidence="7">
        <dbReference type="Rhea" id="RHEA:60237"/>
    </physiologicalReaction>
</comment>
<comment type="catalytic activity">
    <reaction evidence="8">
        <text>N(6),N(6),N(6)-trimethyl-L-lysyl(27)-[histone H3] + 2 2-oxoglutarate + 2 O2 = N(6)-methyl-L-lysyl(27)-[histone H3] + 2 formaldehyde + 2 succinate + 2 CO2</text>
        <dbReference type="Rhea" id="RHEA:60224"/>
        <dbReference type="Rhea" id="RHEA-COMP:15535"/>
        <dbReference type="Rhea" id="RHEA-COMP:15544"/>
        <dbReference type="ChEBI" id="CHEBI:15379"/>
        <dbReference type="ChEBI" id="CHEBI:16526"/>
        <dbReference type="ChEBI" id="CHEBI:16810"/>
        <dbReference type="ChEBI" id="CHEBI:16842"/>
        <dbReference type="ChEBI" id="CHEBI:30031"/>
        <dbReference type="ChEBI" id="CHEBI:61929"/>
        <dbReference type="ChEBI" id="CHEBI:61961"/>
        <dbReference type="EC" id="1.14.11.68"/>
    </reaction>
    <physiologicalReaction direction="left-to-right" evidence="8">
        <dbReference type="Rhea" id="RHEA:60225"/>
    </physiologicalReaction>
</comment>
<comment type="catalytic activity">
    <reaction evidence="7">
        <text>N(6),N(6)-dimethyl-L-lysyl(36)-[histone H3] + 2 2-oxoglutarate + 2 O2 = L-lysyl(36)-[histone H3] + 2 formaldehyde + 2 succinate + 2 CO2</text>
        <dbReference type="Rhea" id="RHEA:42032"/>
        <dbReference type="Rhea" id="RHEA-COMP:9785"/>
        <dbReference type="Rhea" id="RHEA-COMP:9787"/>
        <dbReference type="ChEBI" id="CHEBI:15379"/>
        <dbReference type="ChEBI" id="CHEBI:16526"/>
        <dbReference type="ChEBI" id="CHEBI:16810"/>
        <dbReference type="ChEBI" id="CHEBI:16842"/>
        <dbReference type="ChEBI" id="CHEBI:29969"/>
        <dbReference type="ChEBI" id="CHEBI:30031"/>
        <dbReference type="ChEBI" id="CHEBI:61976"/>
        <dbReference type="EC" id="1.14.11.27"/>
    </reaction>
    <physiologicalReaction direction="left-to-right" evidence="7">
        <dbReference type="Rhea" id="RHEA:42033"/>
    </physiologicalReaction>
</comment>
<comment type="cofactor">
    <cofactor evidence="1">
        <name>Fe(2+)</name>
        <dbReference type="ChEBI" id="CHEBI:29033"/>
    </cofactor>
    <text evidence="1">Binds 1 Fe(2+) ion per subunit.</text>
</comment>
<comment type="subunit">
    <text evidence="7 9">Interacts with EFM (PubMed:25132385). Binds to ATXR2, ARF7 and ARF19 (PubMed:29923261).</text>
</comment>
<comment type="subcellular location">
    <subcellularLocation>
        <location evidence="8 18">Nucleus</location>
    </subcellularLocation>
    <subcellularLocation>
        <location evidence="8 18">Cytoplasm</location>
    </subcellularLocation>
    <subcellularLocation>
        <location evidence="8">Endoplasmic reticulum</location>
    </subcellularLocation>
    <text evidence="8">Predominantly localized in the nucleus, especially in euchromatin.</text>
</comment>
<comment type="alternative products">
    <event type="alternative splicing"/>
    <isoform>
        <id>Q8RWR1-1</id>
        <name>1</name>
        <sequence type="displayed"/>
    </isoform>
    <isoform>
        <id>Q8RWR1-2</id>
        <name>2</name>
        <sequence type="described" ref="VSP_055399"/>
    </isoform>
</comment>
<comment type="tissue specificity">
    <text evidence="3 8 9 11 13">Expressed ubiquitously in vasculatures, roots, rosette leaves, stems, inflorescences and siliques (PubMed:18713399, PubMed:25267112). Mainly present in the root meristem and root differentiation area (PubMed:30859592, PubMed:33324437). Observed at high level in callus (PubMed:29923261).</text>
</comment>
<comment type="developmental stage">
    <text evidence="9 13">Accumulates progressively during seedling growth (PubMed:33324437). Expressed during callus formation (PubMed:29923261).</text>
</comment>
<comment type="induction">
    <text evidence="4 5 7 8 11 13">Circadian-regulation with a broad peak in the late day and early night (PubMed:21115819, PubMed:21139085, PubMed:25132385). Stabilized at elevated temperatures (at protein level) (PubMed:25267112). Induced by abscisic acid (ABA) specifically during the post-germination stage in an ABI3-dependent manner (PubMed:30859592). Repressed by brassinosteroids (BR) during the post-germination stage (PubMed:33324437).</text>
</comment>
<comment type="disruption phenotype">
    <text evidence="4 5 6 8 9 10 11 12 13">Altered overall H3K36me3 modifications (PubMed:30774641). No visible phenotype under normal growth conditions, but mutant plants have a short-period circadian phenotype (PubMed:21115819, PubMed:21139085, PubMed:21358285, PubMed:30774641, PubMed:30859592). Defective temperature compensation leading to shorter circadian period at increasing temperatures with altered expression levels of clock genes at 27 degrees Celsius (PubMed:30774641). Reduced callus formation from somatic cells associated with low Lateral organ Boundaries-Domain (LBD) transcript levels (e.g. LBD16, LBD17, LBD18 and LBD29) associated with an impaired reduction of H3K9me3 deposition and altered H3K36me3 accumulation at their loci during leaf-to-callus transition (PubMed:29923261). The double mutant jmj30-2 atxr2-1 is strongly impaired in callus formation (PubMed:29923261). Reduced abscisic acid (ABA)-mediated growth arrest during the post-germination stage, with stronger effect in plants lacking both JMJ30 and JMJ32 (PubMed:30859592). The double mutant missing JMJ30 and JMJ32 exhibits an early-flowering phenotype at elevated temperatures (e.g. 29 degrees Celsius), associated with increased H3K27me3 levels at the FLC locus and decreased FLC expression (PubMed:25267112). The double mutant jmj30 jmj32 has longer primary roots (PubMed:30983495). In jmj30-2 jmj32-1 double mutants, reduced brassinosteroids (BR) mediated repression of ABA-inducible genes (e.g. ABI5, ABF2, ABF3 and ABF4) (PubMed:33324437).</text>
</comment>
<comment type="miscellaneous">
    <text evidence="18">Plants over-expressing JMJD5 show delayed flowering.</text>
</comment>
<comment type="similarity">
    <text evidence="17">Belongs to the JARID1 histone demethylase family.</text>
</comment>
<evidence type="ECO:0000250" key="1">
    <source>
        <dbReference type="UniProtKB" id="Q8GUI6"/>
    </source>
</evidence>
<evidence type="ECO:0000255" key="2">
    <source>
        <dbReference type="PROSITE-ProRule" id="PRU00538"/>
    </source>
</evidence>
<evidence type="ECO:0000269" key="3">
    <source>
    </source>
</evidence>
<evidence type="ECO:0000269" key="4">
    <source>
    </source>
</evidence>
<evidence type="ECO:0000269" key="5">
    <source>
    </source>
</evidence>
<evidence type="ECO:0000269" key="6">
    <source>
    </source>
</evidence>
<evidence type="ECO:0000269" key="7">
    <source>
    </source>
</evidence>
<evidence type="ECO:0000269" key="8">
    <source>
    </source>
</evidence>
<evidence type="ECO:0000269" key="9">
    <source>
    </source>
</evidence>
<evidence type="ECO:0000269" key="10">
    <source>
    </source>
</evidence>
<evidence type="ECO:0000269" key="11">
    <source>
    </source>
</evidence>
<evidence type="ECO:0000269" key="12">
    <source>
    </source>
</evidence>
<evidence type="ECO:0000269" key="13">
    <source>
    </source>
</evidence>
<evidence type="ECO:0000303" key="14">
    <source>
    </source>
</evidence>
<evidence type="ECO:0000303" key="15">
    <source>
    </source>
</evidence>
<evidence type="ECO:0000303" key="16">
    <source ref="4"/>
</evidence>
<evidence type="ECO:0000305" key="17"/>
<evidence type="ECO:0000305" key="18">
    <source>
    </source>
</evidence>
<evidence type="ECO:0000312" key="19">
    <source>
        <dbReference type="Araport" id="AT3G20810"/>
    </source>
</evidence>
<evidence type="ECO:0000312" key="20">
    <source>
        <dbReference type="EMBL" id="BAB02489.1"/>
    </source>
</evidence>
<gene>
    <name evidence="14" type="primary">JMJ30</name>
    <name evidence="15" type="synonym">JMJD5</name>
    <name evidence="19" type="ordered locus">At3g20810</name>
    <name evidence="20" type="ORF">MOE17.12</name>
</gene>
<organism>
    <name type="scientific">Arabidopsis thaliana</name>
    <name type="common">Mouse-ear cress</name>
    <dbReference type="NCBI Taxonomy" id="3702"/>
    <lineage>
        <taxon>Eukaryota</taxon>
        <taxon>Viridiplantae</taxon>
        <taxon>Streptophyta</taxon>
        <taxon>Embryophyta</taxon>
        <taxon>Tracheophyta</taxon>
        <taxon>Spermatophyta</taxon>
        <taxon>Magnoliopsida</taxon>
        <taxon>eudicotyledons</taxon>
        <taxon>Gunneridae</taxon>
        <taxon>Pentapetalae</taxon>
        <taxon>rosids</taxon>
        <taxon>malvids</taxon>
        <taxon>Brassicales</taxon>
        <taxon>Brassicaceae</taxon>
        <taxon>Camelineae</taxon>
        <taxon>Arabidopsis</taxon>
    </lineage>
</organism>
<accession>Q8RWR1</accession>
<accession>Q9LT40</accession>
<name>JMJ30_ARATH</name>
<keyword id="KW-0938">Abscisic acid signaling pathway</keyword>
<keyword id="KW-0025">Alternative splicing</keyword>
<keyword id="KW-1070">Brassinosteroid signaling pathway</keyword>
<keyword id="KW-0963">Cytoplasm</keyword>
<keyword id="KW-0223">Dioxygenase</keyword>
<keyword id="KW-0256">Endoplasmic reticulum</keyword>
<keyword id="KW-0287">Flowering</keyword>
<keyword id="KW-0408">Iron</keyword>
<keyword id="KW-0479">Metal-binding</keyword>
<keyword id="KW-0539">Nucleus</keyword>
<keyword id="KW-0560">Oxidoreductase</keyword>
<keyword id="KW-1185">Reference proteome</keyword>
<feature type="chain" id="PRO_0000429999" description="Lysine-specific demethylase JMJ30">
    <location>
        <begin position="1"/>
        <end position="429"/>
    </location>
</feature>
<feature type="domain" description="JmjC" evidence="2">
    <location>
        <begin position="272"/>
        <end position="429"/>
    </location>
</feature>
<feature type="binding site" evidence="2">
    <location>
        <position position="326"/>
    </location>
    <ligand>
        <name>Fe cation</name>
        <dbReference type="ChEBI" id="CHEBI:24875"/>
        <note>catalytic</note>
    </ligand>
</feature>
<feature type="binding site" evidence="2">
    <location>
        <position position="328"/>
    </location>
    <ligand>
        <name>Fe cation</name>
        <dbReference type="ChEBI" id="CHEBI:24875"/>
        <note>catalytic</note>
    </ligand>
</feature>
<feature type="binding site" evidence="2">
    <location>
        <position position="405"/>
    </location>
    <ligand>
        <name>Fe cation</name>
        <dbReference type="ChEBI" id="CHEBI:24875"/>
        <note>catalytic</note>
    </ligand>
</feature>
<feature type="splice variant" id="VSP_055399" description="In isoform 2." evidence="16">
    <location>
        <begin position="163"/>
        <end position="173"/>
    </location>
</feature>
<feature type="mutagenesis site" description="Abolished ability to demethylate H3K27me3 and H3K27me2. Impaired temperature compensation of the circadian period in response to increasing temperatures." evidence="8 10">
    <original>H</original>
    <variation>A</variation>
    <location>
        <position position="326"/>
    </location>
</feature>
<sequence>MSGATTASSGDHNNLRLPTPTLDAESQTLLQSISAEGGYAYARMAVLAVAGDQSAAEAARDMAWEQLHSGPWHSVLPVWRDAYSMACLHVAKIHFAAGEFGEALGALDMGLIMGGMLLRKDLHDSVLLVSSEARKMTKSLEEASGDFKGERLVPEVPVDVNEVRHVLANLQLLVLKILPCRSLTCKRVEKRSGLSLEGFLRDYYLPGTPVVITNSMAHWPARTKWNHLDYLNAVAGNRTVPVEVGKNYLCSDWKQELVTFSKFLERMRTNKSSPMEPTYLAQHPLFDQINELRDDICIPDYCFVGGGELQSLNAWFGPAGTVTPLHHDPHHNILAQVVGKKYIRLYPSFLQDELYPYSETMLCNSSQVDLDNIDETEFPKAMELEFMDCILEEGEMLYIPPKWWHYVRSLTMSLSVSFWWSNEAESSSS</sequence>
<reference key="1">
    <citation type="journal article" date="2000" name="DNA Res.">
        <title>Structural analysis of Arabidopsis thaliana chromosome 3. I. Sequence features of the regions of 4,504,864 bp covered by sixty P1 and TAC clones.</title>
        <authorList>
            <person name="Sato S."/>
            <person name="Nakamura Y."/>
            <person name="Kaneko T."/>
            <person name="Katoh T."/>
            <person name="Asamizu E."/>
            <person name="Tabata S."/>
        </authorList>
    </citation>
    <scope>NUCLEOTIDE SEQUENCE [LARGE SCALE GENOMIC DNA]</scope>
    <source>
        <strain>cv. Columbia</strain>
    </source>
</reference>
<reference key="2">
    <citation type="journal article" date="2017" name="Plant J.">
        <title>Araport11: a complete reannotation of the Arabidopsis thaliana reference genome.</title>
        <authorList>
            <person name="Cheng C.Y."/>
            <person name="Krishnakumar V."/>
            <person name="Chan A.P."/>
            <person name="Thibaud-Nissen F."/>
            <person name="Schobel S."/>
            <person name="Town C.D."/>
        </authorList>
    </citation>
    <scope>GENOME REANNOTATION</scope>
    <source>
        <strain>cv. Columbia</strain>
    </source>
</reference>
<reference key="3">
    <citation type="journal article" date="2003" name="Science">
        <title>Empirical analysis of transcriptional activity in the Arabidopsis genome.</title>
        <authorList>
            <person name="Yamada K."/>
            <person name="Lim J."/>
            <person name="Dale J.M."/>
            <person name="Chen H."/>
            <person name="Shinn P."/>
            <person name="Palm C.J."/>
            <person name="Southwick A.M."/>
            <person name="Wu H.C."/>
            <person name="Kim C.J."/>
            <person name="Nguyen M."/>
            <person name="Pham P.K."/>
            <person name="Cheuk R.F."/>
            <person name="Karlin-Newmann G."/>
            <person name="Liu S.X."/>
            <person name="Lam B."/>
            <person name="Sakano H."/>
            <person name="Wu T."/>
            <person name="Yu G."/>
            <person name="Miranda M."/>
            <person name="Quach H.L."/>
            <person name="Tripp M."/>
            <person name="Chang C.H."/>
            <person name="Lee J.M."/>
            <person name="Toriumi M.J."/>
            <person name="Chan M.M."/>
            <person name="Tang C.C."/>
            <person name="Onodera C.S."/>
            <person name="Deng J.M."/>
            <person name="Akiyama K."/>
            <person name="Ansari Y."/>
            <person name="Arakawa T."/>
            <person name="Banh J."/>
            <person name="Banno F."/>
            <person name="Bowser L."/>
            <person name="Brooks S.Y."/>
            <person name="Carninci P."/>
            <person name="Chao Q."/>
            <person name="Choy N."/>
            <person name="Enju A."/>
            <person name="Goldsmith A.D."/>
            <person name="Gurjal M."/>
            <person name="Hansen N.F."/>
            <person name="Hayashizaki Y."/>
            <person name="Johnson-Hopson C."/>
            <person name="Hsuan V.W."/>
            <person name="Iida K."/>
            <person name="Karnes M."/>
            <person name="Khan S."/>
            <person name="Koesema E."/>
            <person name="Ishida J."/>
            <person name="Jiang P.X."/>
            <person name="Jones T."/>
            <person name="Kawai J."/>
            <person name="Kamiya A."/>
            <person name="Meyers C."/>
            <person name="Nakajima M."/>
            <person name="Narusaka M."/>
            <person name="Seki M."/>
            <person name="Sakurai T."/>
            <person name="Satou M."/>
            <person name="Tamse R."/>
            <person name="Vaysberg M."/>
            <person name="Wallender E.K."/>
            <person name="Wong C."/>
            <person name="Yamamura Y."/>
            <person name="Yuan S."/>
            <person name="Shinozaki K."/>
            <person name="Davis R.W."/>
            <person name="Theologis A."/>
            <person name="Ecker J.R."/>
        </authorList>
    </citation>
    <scope>NUCLEOTIDE SEQUENCE [LARGE SCALE MRNA] (ISOFORM 1)</scope>
    <source>
        <strain>cv. Columbia</strain>
    </source>
</reference>
<reference key="4">
    <citation type="submission" date="2002-03" db="EMBL/GenBank/DDBJ databases">
        <title>Full-length cDNA from Arabidopsis thaliana.</title>
        <authorList>
            <person name="Brover V.V."/>
            <person name="Troukhan M.E."/>
            <person name="Alexandrov N.A."/>
            <person name="Lu Y.-P."/>
            <person name="Flavell R.B."/>
            <person name="Feldmann K.A."/>
        </authorList>
    </citation>
    <scope>NUCLEOTIDE SEQUENCE [LARGE SCALE MRNA] (ISOFORM 2)</scope>
</reference>
<reference key="5">
    <citation type="journal article" date="2008" name="J. Integr. Plant Biol.">
        <title>Comparative analysis of JmjC domain-containing proteins reveals the potential histone demethylases in Arabidopsis and rice.</title>
        <authorList>
            <person name="Lu F."/>
            <person name="Li G."/>
            <person name="Cui X."/>
            <person name="Liu C."/>
            <person name="Wang X.-J."/>
            <person name="Cao X."/>
        </authorList>
    </citation>
    <scope>TISSUE SPECIFICITY</scope>
    <scope>GENE FAMILY</scope>
    <scope>NOMENCLATURE</scope>
</reference>
<reference key="6">
    <citation type="journal article" date="2010" name="Proc. Natl. Acad. Sci. U.S.A.">
        <title>Jumonji domain protein JMJD5 functions in both the plant and human circadian systems.</title>
        <authorList>
            <person name="Jones M.A."/>
            <person name="Covington M.F."/>
            <person name="DiTacchio L."/>
            <person name="Vollmers C."/>
            <person name="Panda S."/>
            <person name="Harmer S.L."/>
        </authorList>
    </citation>
    <scope>FUNCTION</scope>
    <scope>INDUCTION</scope>
    <scope>DISRUPTION PHENOTYPE</scope>
</reference>
<reference key="7">
    <citation type="journal article" date="2011" name="Plant Physiol.">
        <title>The Jumonji C domain-containing protein JMJ30 regulates period length in the Arabidopsis circadian clock.</title>
        <authorList>
            <person name="Lu S.X."/>
            <person name="Knowles S.M."/>
            <person name="Webb C.J."/>
            <person name="Celaya R.B."/>
            <person name="Cha C."/>
            <person name="Siu J.P."/>
            <person name="Tobin E.M."/>
        </authorList>
    </citation>
    <scope>FUNCTION</scope>
    <scope>SUBCELLULAR LOCATION</scope>
    <scope>INDUCTION</scope>
    <scope>DISRUPTION PHENOTYPE</scope>
</reference>
<reference key="8">
    <citation type="journal article" date="2011" name="Plant Signal. Behav.">
        <title>JMJD5 functions in concert with TOC1 in the Arabidopsis circadian system.</title>
        <authorList>
            <person name="Jones M.A."/>
            <person name="Harmer S.L."/>
        </authorList>
    </citation>
    <scope>FUNCTION</scope>
    <scope>DISRUPTION PHENOTYPE</scope>
    <source>
        <strain>cv. Columbia</strain>
    </source>
</reference>
<reference key="9">
    <citation type="journal article" date="2014" name="Dev. Cell">
        <title>A MYB-domain protein EFM mediates flowering responses to environmental cues in Arabidopsis.</title>
        <authorList>
            <person name="Yan Y."/>
            <person name="Shen L."/>
            <person name="Chen Y."/>
            <person name="Bao S."/>
            <person name="Thong Z."/>
            <person name="Yu H."/>
        </authorList>
    </citation>
    <scope>FUNCTION</scope>
    <scope>CATALYTIC ACTIVITY</scope>
    <scope>INTERACTION WITH EFM</scope>
    <scope>INDUCTION</scope>
</reference>
<reference key="10">
    <citation type="journal article" date="2014" name="Nat. Commun.">
        <title>Jumonji demethylases moderate precocious flowering at elevated temperature via regulation of FLC in Arabidopsis.</title>
        <authorList>
            <person name="Gan E.-S."/>
            <person name="Xu Y."/>
            <person name="Wong J.-Y."/>
            <person name="Goh J.G."/>
            <person name="Sun B."/>
            <person name="Wee W.-Y."/>
            <person name="Huang J."/>
            <person name="Ito T."/>
        </authorList>
    </citation>
    <scope>FUNCTION</scope>
    <scope>MUTAGENESIS OF HIS-326</scope>
    <scope>DISRUPTION PHENOTYPE</scope>
    <scope>CATALYTIC ACTIVITY</scope>
    <scope>INDUCTION BY ELEVATED TEMPERATURES</scope>
    <scope>TISSUE SPECIFICITY</scope>
    <scope>SUBCELLULAR LOCATION</scope>
    <source>
        <strain>cv. Columbia</strain>
    </source>
</reference>
<reference key="11">
    <citation type="journal article" date="2018" name="Plant J.">
        <title>JMJ30-mediated demethylation of H3K9me3 drives tissue identity changes to promote callus formation in Arabidopsis.</title>
        <authorList>
            <person name="Lee K."/>
            <person name="Park O.-S."/>
            <person name="Seo P.J."/>
        </authorList>
    </citation>
    <scope>FUNCTION</scope>
    <scope>DISRUPTION PHENOTYPE</scope>
    <scope>TISSUE SPECIFICITY</scope>
    <scope>DEVELOPMENTAL STAGE</scope>
    <scope>INTERACTION WITH ATXR2; ARF7 AND ARF19</scope>
    <source>
        <strain>cv. Columbia</strain>
    </source>
</reference>
<reference key="12">
    <citation type="journal article" date="2019" name="Front. Plant Sci.">
        <title>Arabidopsis JMJD5/JMJ30 acts independently of LUX ARRHYTHMO within the plant circadian clock to enable temperature compensation.</title>
        <authorList>
            <person name="Jones M.A."/>
            <person name="Morohashi K."/>
            <person name="Grotewold E."/>
            <person name="Harmer S.L."/>
        </authorList>
    </citation>
    <scope>FUNCTION</scope>
    <scope>MUTAGENESIS OF HIS-326</scope>
    <scope>DISRUPTION PHENOTYPE</scope>
    <source>
        <strain>cv. Columbia</strain>
    </source>
</reference>
<reference key="13">
    <citation type="journal article" date="2019" name="Plant Cell Environ.">
        <title>Abscisic acid-dependent histone demethylation during postgermination growth arrest in Arabidopsis.</title>
        <authorList>
            <person name="Wu J."/>
            <person name="Ichihashi Y."/>
            <person name="Suzuki T."/>
            <person name="Shibata A."/>
            <person name="Shirasu K."/>
            <person name="Yamaguchi N."/>
            <person name="Ito T."/>
        </authorList>
    </citation>
    <scope>FUNCTION</scope>
    <scope>DISRUPTION PHENOTYPE</scope>
    <scope>TISSUE SPECIFICITY</scope>
    <scope>INDUCTION BY ABSCISIC ACID</scope>
    <source>
        <strain>cv. Columbia</strain>
    </source>
</reference>
<reference key="14">
    <citation type="journal article" date="2019" name="Plant Signal. Behav.">
        <title>Histone demethylases control root elongation in response to stress-signaling hormone abscisic acid.</title>
        <authorList>
            <person name="Wu J."/>
            <person name="Yamaguchi N."/>
            <person name="Ito T."/>
        </authorList>
    </citation>
    <scope>FUNCTION</scope>
    <scope>DISRUPTION PHENOTYPE</scope>
    <source>
        <strain>cv. Columbia</strain>
    </source>
</reference>
<reference key="15">
    <citation type="journal article" date="2020" name="Front. Plant Sci.">
        <title>Histone demethylases coordinate the antagonistic interaction between abscisic acid and brassinosteroid signaling in Arabidopsis.</title>
        <authorList>
            <person name="Wu J."/>
            <person name="Yan M."/>
            <person name="Zhang D."/>
            <person name="Zhou D."/>
            <person name="Yamaguchi N."/>
            <person name="Ito T."/>
        </authorList>
    </citation>
    <scope>FUNCTION</scope>
    <scope>DISRUPTION PHENOTYPE</scope>
    <scope>REPRESSION BY BRASSINOSTEROIDS</scope>
    <scope>TISSUE SPECIFICITY</scope>
    <scope>DEVELOPMENTAL STAGE</scope>
    <source>
        <strain>cv. Columbia</strain>
    </source>
</reference>
<dbReference type="EC" id="1.14.11.27" evidence="7"/>
<dbReference type="EC" id="1.14.11.68" evidence="8"/>
<dbReference type="EC" id="1.14.11.69" evidence="7"/>
<dbReference type="EMBL" id="AB025629">
    <property type="protein sequence ID" value="BAB02489.1"/>
    <property type="molecule type" value="Genomic_DNA"/>
</dbReference>
<dbReference type="EMBL" id="CP002686">
    <property type="protein sequence ID" value="AEE76425.1"/>
    <property type="molecule type" value="Genomic_DNA"/>
</dbReference>
<dbReference type="EMBL" id="CP002686">
    <property type="protein sequence ID" value="AEE76426.1"/>
    <property type="molecule type" value="Genomic_DNA"/>
</dbReference>
<dbReference type="EMBL" id="AY091769">
    <property type="protein sequence ID" value="AAM10317.1"/>
    <property type="molecule type" value="mRNA"/>
</dbReference>
<dbReference type="EMBL" id="AY125538">
    <property type="protein sequence ID" value="AAM78048.1"/>
    <property type="molecule type" value="mRNA"/>
</dbReference>
<dbReference type="EMBL" id="AY084468">
    <property type="protein sequence ID" value="AAM61040.1"/>
    <property type="molecule type" value="mRNA"/>
</dbReference>
<dbReference type="RefSeq" id="NP_566667.1">
    <molecule id="Q8RWR1-2"/>
    <property type="nucleotide sequence ID" value="NM_112972.4"/>
</dbReference>
<dbReference type="RefSeq" id="NP_850617.1">
    <molecule id="Q8RWR1-1"/>
    <property type="nucleotide sequence ID" value="NM_180286.1"/>
</dbReference>
<dbReference type="SMR" id="Q8RWR1"/>
<dbReference type="BioGRID" id="6961">
    <property type="interactions" value="9"/>
</dbReference>
<dbReference type="FunCoup" id="Q8RWR1">
    <property type="interactions" value="1465"/>
</dbReference>
<dbReference type="IntAct" id="Q8RWR1">
    <property type="interactions" value="8"/>
</dbReference>
<dbReference type="STRING" id="3702.Q8RWR1"/>
<dbReference type="iPTMnet" id="Q8RWR1"/>
<dbReference type="PaxDb" id="3702-AT3G20810.2"/>
<dbReference type="ProteomicsDB" id="238990">
    <molecule id="Q8RWR1-1"/>
</dbReference>
<dbReference type="EnsemblPlants" id="AT3G20810.1">
    <molecule id="Q8RWR1-2"/>
    <property type="protein sequence ID" value="AT3G20810.1"/>
    <property type="gene ID" value="AT3G20810"/>
</dbReference>
<dbReference type="EnsemblPlants" id="AT3G20810.2">
    <molecule id="Q8RWR1-1"/>
    <property type="protein sequence ID" value="AT3G20810.2"/>
    <property type="gene ID" value="AT3G20810"/>
</dbReference>
<dbReference type="GeneID" id="821629"/>
<dbReference type="Gramene" id="AT3G20810.1">
    <molecule id="Q8RWR1-2"/>
    <property type="protein sequence ID" value="AT3G20810.1"/>
    <property type="gene ID" value="AT3G20810"/>
</dbReference>
<dbReference type="Gramene" id="AT3G20810.2">
    <molecule id="Q8RWR1-1"/>
    <property type="protein sequence ID" value="AT3G20810.2"/>
    <property type="gene ID" value="AT3G20810"/>
</dbReference>
<dbReference type="KEGG" id="ath:AT3G20810"/>
<dbReference type="Araport" id="AT3G20810"/>
<dbReference type="TAIR" id="AT3G20810">
    <property type="gene designation" value="JMJD5"/>
</dbReference>
<dbReference type="eggNOG" id="KOG2132">
    <property type="taxonomic scope" value="Eukaryota"/>
</dbReference>
<dbReference type="InParanoid" id="Q8RWR1"/>
<dbReference type="PhylomeDB" id="Q8RWR1"/>
<dbReference type="PRO" id="PR:Q8RWR1"/>
<dbReference type="Proteomes" id="UP000006548">
    <property type="component" value="Chromosome 3"/>
</dbReference>
<dbReference type="ExpressionAtlas" id="Q8RWR1">
    <property type="expression patterns" value="baseline and differential"/>
</dbReference>
<dbReference type="GO" id="GO:0005737">
    <property type="term" value="C:cytoplasm"/>
    <property type="evidence" value="ECO:0000314"/>
    <property type="project" value="UniProtKB"/>
</dbReference>
<dbReference type="GO" id="GO:0005783">
    <property type="term" value="C:endoplasmic reticulum"/>
    <property type="evidence" value="ECO:0000314"/>
    <property type="project" value="UniProtKB"/>
</dbReference>
<dbReference type="GO" id="GO:0000791">
    <property type="term" value="C:euchromatin"/>
    <property type="evidence" value="ECO:0000314"/>
    <property type="project" value="UniProtKB"/>
</dbReference>
<dbReference type="GO" id="GO:0005634">
    <property type="term" value="C:nucleus"/>
    <property type="evidence" value="ECO:0000314"/>
    <property type="project" value="UniProtKB"/>
</dbReference>
<dbReference type="GO" id="GO:0003700">
    <property type="term" value="F:DNA-binding transcription factor activity"/>
    <property type="evidence" value="ECO:0000353"/>
    <property type="project" value="TAIR"/>
</dbReference>
<dbReference type="GO" id="GO:0071558">
    <property type="term" value="F:histone H3K27me2/H3K27me3 demethylase activity"/>
    <property type="evidence" value="ECO:0000314"/>
    <property type="project" value="UniProtKB"/>
</dbReference>
<dbReference type="GO" id="GO:0061628">
    <property type="term" value="F:histone H3K27me3 reader activity"/>
    <property type="evidence" value="ECO:0000314"/>
    <property type="project" value="UniProtKB"/>
</dbReference>
<dbReference type="GO" id="GO:0046975">
    <property type="term" value="F:histone H3K36 methyltransferase activity"/>
    <property type="evidence" value="ECO:0000314"/>
    <property type="project" value="TAIR"/>
</dbReference>
<dbReference type="GO" id="GO:0140680">
    <property type="term" value="F:histone H3K36me/H3K36me2 demethylase activity"/>
    <property type="evidence" value="ECO:0007669"/>
    <property type="project" value="RHEA"/>
</dbReference>
<dbReference type="GO" id="GO:0140681">
    <property type="term" value="F:histone H3K36me2/H3K36me3 demethylase activity"/>
    <property type="evidence" value="ECO:0007669"/>
    <property type="project" value="RHEA"/>
</dbReference>
<dbReference type="GO" id="GO:0140684">
    <property type="term" value="F:histone H3K9me2/H3K9me3 demethylase activity"/>
    <property type="evidence" value="ECO:0000315"/>
    <property type="project" value="UniProtKB"/>
</dbReference>
<dbReference type="GO" id="GO:0046872">
    <property type="term" value="F:metal ion binding"/>
    <property type="evidence" value="ECO:0007669"/>
    <property type="project" value="UniProtKB-KW"/>
</dbReference>
<dbReference type="GO" id="GO:0043565">
    <property type="term" value="F:sequence-specific DNA binding"/>
    <property type="evidence" value="ECO:0000314"/>
    <property type="project" value="UniProtKB"/>
</dbReference>
<dbReference type="GO" id="GO:0009738">
    <property type="term" value="P:abscisic acid-activated signaling pathway"/>
    <property type="evidence" value="ECO:0007669"/>
    <property type="project" value="UniProtKB-KW"/>
</dbReference>
<dbReference type="GO" id="GO:0009742">
    <property type="term" value="P:brassinosteroid mediated signaling pathway"/>
    <property type="evidence" value="ECO:0007669"/>
    <property type="project" value="UniProtKB-KW"/>
</dbReference>
<dbReference type="GO" id="GO:1990110">
    <property type="term" value="P:callus formation"/>
    <property type="evidence" value="ECO:0000315"/>
    <property type="project" value="UniProtKB"/>
</dbReference>
<dbReference type="GO" id="GO:0007623">
    <property type="term" value="P:circadian rhythm"/>
    <property type="evidence" value="ECO:0000315"/>
    <property type="project" value="TAIR"/>
</dbReference>
<dbReference type="GO" id="GO:0040029">
    <property type="term" value="P:epigenetic regulation of gene expression"/>
    <property type="evidence" value="ECO:0000314"/>
    <property type="project" value="UniProtKB"/>
</dbReference>
<dbReference type="GO" id="GO:0009908">
    <property type="term" value="P:flower development"/>
    <property type="evidence" value="ECO:0007669"/>
    <property type="project" value="UniProtKB-KW"/>
</dbReference>
<dbReference type="GO" id="GO:0045814">
    <property type="term" value="P:negative regulation of gene expression, epigenetic"/>
    <property type="evidence" value="ECO:0000314"/>
    <property type="project" value="UniProtKB"/>
</dbReference>
<dbReference type="GO" id="GO:0080022">
    <property type="term" value="P:primary root development"/>
    <property type="evidence" value="ECO:0000315"/>
    <property type="project" value="UniProtKB"/>
</dbReference>
<dbReference type="GO" id="GO:0009787">
    <property type="term" value="P:regulation of abscisic acid-activated signaling pathway"/>
    <property type="evidence" value="ECO:0000315"/>
    <property type="project" value="UniProtKB"/>
</dbReference>
<dbReference type="GO" id="GO:1900457">
    <property type="term" value="P:regulation of brassinosteroid mediated signaling pathway"/>
    <property type="evidence" value="ECO:0000315"/>
    <property type="project" value="UniProtKB"/>
</dbReference>
<dbReference type="GO" id="GO:0042752">
    <property type="term" value="P:regulation of circadian rhythm"/>
    <property type="evidence" value="ECO:0000315"/>
    <property type="project" value="UniProtKB"/>
</dbReference>
<dbReference type="GO" id="GO:0010468">
    <property type="term" value="P:regulation of gene expression"/>
    <property type="evidence" value="ECO:0000315"/>
    <property type="project" value="UniProtKB"/>
</dbReference>
<dbReference type="GO" id="GO:2000028">
    <property type="term" value="P:regulation of photoperiodism, flowering"/>
    <property type="evidence" value="ECO:0000315"/>
    <property type="project" value="UniProtKB"/>
</dbReference>
<dbReference type="GO" id="GO:1900140">
    <property type="term" value="P:regulation of seedling development"/>
    <property type="evidence" value="ECO:0000315"/>
    <property type="project" value="UniProtKB"/>
</dbReference>
<dbReference type="GO" id="GO:0009737">
    <property type="term" value="P:response to abscisic acid"/>
    <property type="evidence" value="ECO:0000315"/>
    <property type="project" value="UniProtKB"/>
</dbReference>
<dbReference type="GO" id="GO:0009741">
    <property type="term" value="P:response to brassinosteroid"/>
    <property type="evidence" value="ECO:0000270"/>
    <property type="project" value="UniProtKB"/>
</dbReference>
<dbReference type="GO" id="GO:0009266">
    <property type="term" value="P:response to temperature stimulus"/>
    <property type="evidence" value="ECO:0000314"/>
    <property type="project" value="UniProtKB"/>
</dbReference>
<dbReference type="GO" id="GO:0010378">
    <property type="term" value="P:temperature compensation of the circadian clock"/>
    <property type="evidence" value="ECO:0000315"/>
    <property type="project" value="UniProtKB"/>
</dbReference>
<dbReference type="FunFam" id="2.60.120.650:FF:000029">
    <property type="entry name" value="lysine-specific demethylase JMJ30"/>
    <property type="match status" value="1"/>
</dbReference>
<dbReference type="Gene3D" id="2.60.120.650">
    <property type="entry name" value="Cupin"/>
    <property type="match status" value="1"/>
</dbReference>
<dbReference type="InterPro" id="IPR056520">
    <property type="entry name" value="ARM_KDM8_N"/>
</dbReference>
<dbReference type="InterPro" id="IPR041667">
    <property type="entry name" value="Cupin_8"/>
</dbReference>
<dbReference type="InterPro" id="IPR003347">
    <property type="entry name" value="JmjC_dom"/>
</dbReference>
<dbReference type="PANTHER" id="PTHR12461">
    <property type="entry name" value="HYPOXIA-INDUCIBLE FACTOR 1 ALPHA INHIBITOR-RELATED"/>
    <property type="match status" value="1"/>
</dbReference>
<dbReference type="PANTHER" id="PTHR12461:SF105">
    <property type="entry name" value="HYPOXIA-INDUCIBLE FACTOR 1-ALPHA INHIBITOR"/>
    <property type="match status" value="1"/>
</dbReference>
<dbReference type="Pfam" id="PF24472">
    <property type="entry name" value="ARM_KDM8_N"/>
    <property type="match status" value="1"/>
</dbReference>
<dbReference type="Pfam" id="PF13621">
    <property type="entry name" value="Cupin_8"/>
    <property type="match status" value="1"/>
</dbReference>
<dbReference type="SMART" id="SM00558">
    <property type="entry name" value="JmjC"/>
    <property type="match status" value="1"/>
</dbReference>
<dbReference type="SUPFAM" id="SSF51197">
    <property type="entry name" value="Clavaminate synthase-like"/>
    <property type="match status" value="1"/>
</dbReference>
<dbReference type="PROSITE" id="PS51184">
    <property type="entry name" value="JMJC"/>
    <property type="match status" value="1"/>
</dbReference>
<proteinExistence type="evidence at protein level"/>
<protein>
    <recommendedName>
        <fullName evidence="14">Lysine-specific demethylase JMJ30</fullName>
        <shortName evidence="14">AtJMJ30</shortName>
        <ecNumber evidence="7">1.14.11.27</ecNumber>
        <ecNumber evidence="8">1.14.11.68</ecNumber>
        <ecNumber evidence="7">1.14.11.69</ecNumber>
    </recommendedName>
    <alternativeName>
        <fullName evidence="14">JmjC domain-containing protein 30</fullName>
    </alternativeName>
    <alternativeName>
        <fullName evidence="15">Jumonji domain-containing protein 5</fullName>
        <shortName evidence="15">AtJMJD5</shortName>
    </alternativeName>
    <alternativeName>
        <fullName evidence="17">[histone H3]-trimethyl-L-lysine(36) monodemethylase JMJ30</fullName>
    </alternativeName>
</protein>